<protein>
    <recommendedName>
        <fullName evidence="1">Phosphoglucosamine mutase</fullName>
        <ecNumber evidence="1">5.4.2.10</ecNumber>
    </recommendedName>
</protein>
<gene>
    <name evidence="1" type="primary">glmM</name>
    <name type="ordered locus">MT3546</name>
</gene>
<organism>
    <name type="scientific">Mycobacterium tuberculosis (strain CDC 1551 / Oshkosh)</name>
    <dbReference type="NCBI Taxonomy" id="83331"/>
    <lineage>
        <taxon>Bacteria</taxon>
        <taxon>Bacillati</taxon>
        <taxon>Actinomycetota</taxon>
        <taxon>Actinomycetes</taxon>
        <taxon>Mycobacteriales</taxon>
        <taxon>Mycobacteriaceae</taxon>
        <taxon>Mycobacterium</taxon>
        <taxon>Mycobacterium tuberculosis complex</taxon>
    </lineage>
</organism>
<comment type="function">
    <text evidence="1">Catalyzes the conversion of glucosamine-6-phosphate to glucosamine-1-phosphate.</text>
</comment>
<comment type="catalytic activity">
    <reaction evidence="1">
        <text>alpha-D-glucosamine 1-phosphate = D-glucosamine 6-phosphate</text>
        <dbReference type="Rhea" id="RHEA:23424"/>
        <dbReference type="ChEBI" id="CHEBI:58516"/>
        <dbReference type="ChEBI" id="CHEBI:58725"/>
        <dbReference type="EC" id="5.4.2.10"/>
    </reaction>
</comment>
<comment type="cofactor">
    <cofactor evidence="1">
        <name>Mg(2+)</name>
        <dbReference type="ChEBI" id="CHEBI:18420"/>
    </cofactor>
    <text evidence="1">Binds 1 Mg(2+) ion per subunit.</text>
</comment>
<comment type="PTM">
    <text evidence="1">Activated by phosphorylation.</text>
</comment>
<comment type="similarity">
    <text evidence="1">Belongs to the phosphohexose mutase family.</text>
</comment>
<proteinExistence type="inferred from homology"/>
<reference key="1">
    <citation type="journal article" date="2002" name="J. Bacteriol.">
        <title>Whole-genome comparison of Mycobacterium tuberculosis clinical and laboratory strains.</title>
        <authorList>
            <person name="Fleischmann R.D."/>
            <person name="Alland D."/>
            <person name="Eisen J.A."/>
            <person name="Carpenter L."/>
            <person name="White O."/>
            <person name="Peterson J.D."/>
            <person name="DeBoy R.T."/>
            <person name="Dodson R.J."/>
            <person name="Gwinn M.L."/>
            <person name="Haft D.H."/>
            <person name="Hickey E.K."/>
            <person name="Kolonay J.F."/>
            <person name="Nelson W.C."/>
            <person name="Umayam L.A."/>
            <person name="Ermolaeva M.D."/>
            <person name="Salzberg S.L."/>
            <person name="Delcher A."/>
            <person name="Utterback T.R."/>
            <person name="Weidman J.F."/>
            <person name="Khouri H.M."/>
            <person name="Gill J."/>
            <person name="Mikula A."/>
            <person name="Bishai W."/>
            <person name="Jacobs W.R. Jr."/>
            <person name="Venter J.C."/>
            <person name="Fraser C.M."/>
        </authorList>
    </citation>
    <scope>NUCLEOTIDE SEQUENCE [LARGE SCALE GENOMIC DNA]</scope>
    <source>
        <strain>CDC 1551 / Oshkosh</strain>
    </source>
</reference>
<evidence type="ECO:0000255" key="1">
    <source>
        <dbReference type="HAMAP-Rule" id="MF_01554"/>
    </source>
</evidence>
<sequence length="448" mass="45873">MGRLFGTDGVRGVANRELTAELALALGAAAARRLSRSGAPGRRVAVLGRDPRASGEMLEAAVIAGLTSEGVDALRVGVLPTPAVAYLTGAYDADFGVMISASHNPMPDNGIKIFGPGGHKLDDDTEDQIEDLVLGVSRGPGLRPAGAGIGRVIDAEDATERYLRHVAKAATARLDDLAVVVDCAHGAASSAAPRAYRAAGARVIAINAEPNGRNINDGCGSTHLDPLRAAVLAHRADLGLAHDGDADRCLAVDANGDLVDGDAIMVVLALAMKEAGELACNTLVATVMSNLGLHLAMRSAGVTVRTTAVGDRYVLEELRAGDYSLGGEQSGHIVMPALGSTGDGIVTGLRLMTRMVQTGSSLSDLASAMRTLPQVLINVEVVDKATAAAAPSVRTAVEQAAAELGDTGRILLRPSGTEPMIRVMVEAADEGVAQRLAATVADAVSTAR</sequence>
<feature type="chain" id="PRO_0000427193" description="Phosphoglucosamine mutase">
    <location>
        <begin position="1"/>
        <end position="448"/>
    </location>
</feature>
<feature type="active site" description="Phosphoserine intermediate" evidence="1">
    <location>
        <position position="102"/>
    </location>
</feature>
<feature type="binding site" description="via phosphate group" evidence="1">
    <location>
        <position position="102"/>
    </location>
    <ligand>
        <name>Mg(2+)</name>
        <dbReference type="ChEBI" id="CHEBI:18420"/>
    </ligand>
</feature>
<feature type="binding site" evidence="1">
    <location>
        <position position="243"/>
    </location>
    <ligand>
        <name>Mg(2+)</name>
        <dbReference type="ChEBI" id="CHEBI:18420"/>
    </ligand>
</feature>
<feature type="binding site" evidence="1">
    <location>
        <position position="245"/>
    </location>
    <ligand>
        <name>Mg(2+)</name>
        <dbReference type="ChEBI" id="CHEBI:18420"/>
    </ligand>
</feature>
<feature type="binding site" evidence="1">
    <location>
        <position position="247"/>
    </location>
    <ligand>
        <name>Mg(2+)</name>
        <dbReference type="ChEBI" id="CHEBI:18420"/>
    </ligand>
</feature>
<feature type="modified residue" description="Phosphoserine" evidence="1">
    <location>
        <position position="102"/>
    </location>
</feature>
<dbReference type="EC" id="5.4.2.10" evidence="1"/>
<dbReference type="EMBL" id="AE000516">
    <property type="protein sequence ID" value="AAK47887.1"/>
    <property type="molecule type" value="Genomic_DNA"/>
</dbReference>
<dbReference type="PIR" id="G70976">
    <property type="entry name" value="G70976"/>
</dbReference>
<dbReference type="RefSeq" id="WP_003418304.1">
    <property type="nucleotide sequence ID" value="NZ_KK341227.1"/>
</dbReference>
<dbReference type="SMR" id="P9WN40"/>
<dbReference type="KEGG" id="mtc:MT3546"/>
<dbReference type="PATRIC" id="fig|83331.31.peg.3805"/>
<dbReference type="HOGENOM" id="CLU_016950_7_0_11"/>
<dbReference type="Proteomes" id="UP000001020">
    <property type="component" value="Chromosome"/>
</dbReference>
<dbReference type="GO" id="GO:0005829">
    <property type="term" value="C:cytosol"/>
    <property type="evidence" value="ECO:0007669"/>
    <property type="project" value="TreeGrafter"/>
</dbReference>
<dbReference type="GO" id="GO:0000287">
    <property type="term" value="F:magnesium ion binding"/>
    <property type="evidence" value="ECO:0007669"/>
    <property type="project" value="UniProtKB-UniRule"/>
</dbReference>
<dbReference type="GO" id="GO:0008966">
    <property type="term" value="F:phosphoglucosamine mutase activity"/>
    <property type="evidence" value="ECO:0007669"/>
    <property type="project" value="UniProtKB-UniRule"/>
</dbReference>
<dbReference type="GO" id="GO:0004615">
    <property type="term" value="F:phosphomannomutase activity"/>
    <property type="evidence" value="ECO:0007669"/>
    <property type="project" value="TreeGrafter"/>
</dbReference>
<dbReference type="GO" id="GO:0005975">
    <property type="term" value="P:carbohydrate metabolic process"/>
    <property type="evidence" value="ECO:0007669"/>
    <property type="project" value="InterPro"/>
</dbReference>
<dbReference type="GO" id="GO:0009252">
    <property type="term" value="P:peptidoglycan biosynthetic process"/>
    <property type="evidence" value="ECO:0007669"/>
    <property type="project" value="TreeGrafter"/>
</dbReference>
<dbReference type="GO" id="GO:0006048">
    <property type="term" value="P:UDP-N-acetylglucosamine biosynthetic process"/>
    <property type="evidence" value="ECO:0007669"/>
    <property type="project" value="TreeGrafter"/>
</dbReference>
<dbReference type="CDD" id="cd05802">
    <property type="entry name" value="GlmM"/>
    <property type="match status" value="1"/>
</dbReference>
<dbReference type="FunFam" id="3.30.310.50:FF:000001">
    <property type="entry name" value="Phosphoglucosamine mutase"/>
    <property type="match status" value="1"/>
</dbReference>
<dbReference type="FunFam" id="3.40.120.10:FF:000001">
    <property type="entry name" value="Phosphoglucosamine mutase"/>
    <property type="match status" value="1"/>
</dbReference>
<dbReference type="FunFam" id="3.40.120.10:FF:000002">
    <property type="entry name" value="Phosphoglucosamine mutase"/>
    <property type="match status" value="1"/>
</dbReference>
<dbReference type="Gene3D" id="3.40.120.10">
    <property type="entry name" value="Alpha-D-Glucose-1,6-Bisphosphate, subunit A, domain 3"/>
    <property type="match status" value="3"/>
</dbReference>
<dbReference type="Gene3D" id="3.30.310.50">
    <property type="entry name" value="Alpha-D-phosphohexomutase, C-terminal domain"/>
    <property type="match status" value="1"/>
</dbReference>
<dbReference type="HAMAP" id="MF_01554_B">
    <property type="entry name" value="GlmM_B"/>
    <property type="match status" value="1"/>
</dbReference>
<dbReference type="InterPro" id="IPR005844">
    <property type="entry name" value="A-D-PHexomutase_a/b/a-I"/>
</dbReference>
<dbReference type="InterPro" id="IPR016055">
    <property type="entry name" value="A-D-PHexomutase_a/b/a-I/II/III"/>
</dbReference>
<dbReference type="InterPro" id="IPR005845">
    <property type="entry name" value="A-D-PHexomutase_a/b/a-II"/>
</dbReference>
<dbReference type="InterPro" id="IPR005846">
    <property type="entry name" value="A-D-PHexomutase_a/b/a-III"/>
</dbReference>
<dbReference type="InterPro" id="IPR005843">
    <property type="entry name" value="A-D-PHexomutase_C"/>
</dbReference>
<dbReference type="InterPro" id="IPR036900">
    <property type="entry name" value="A-D-PHexomutase_C_sf"/>
</dbReference>
<dbReference type="InterPro" id="IPR016066">
    <property type="entry name" value="A-D-PHexomutase_CS"/>
</dbReference>
<dbReference type="InterPro" id="IPR005841">
    <property type="entry name" value="Alpha-D-phosphohexomutase_SF"/>
</dbReference>
<dbReference type="InterPro" id="IPR006352">
    <property type="entry name" value="GlmM_bact"/>
</dbReference>
<dbReference type="InterPro" id="IPR050060">
    <property type="entry name" value="Phosphoglucosamine_mutase"/>
</dbReference>
<dbReference type="NCBIfam" id="TIGR01455">
    <property type="entry name" value="glmM"/>
    <property type="match status" value="1"/>
</dbReference>
<dbReference type="PANTHER" id="PTHR42946:SF1">
    <property type="entry name" value="PHOSPHOGLUCOMUTASE (ALPHA-D-GLUCOSE-1,6-BISPHOSPHATE-DEPENDENT)"/>
    <property type="match status" value="1"/>
</dbReference>
<dbReference type="PANTHER" id="PTHR42946">
    <property type="entry name" value="PHOSPHOHEXOSE MUTASE"/>
    <property type="match status" value="1"/>
</dbReference>
<dbReference type="Pfam" id="PF02878">
    <property type="entry name" value="PGM_PMM_I"/>
    <property type="match status" value="1"/>
</dbReference>
<dbReference type="Pfam" id="PF02879">
    <property type="entry name" value="PGM_PMM_II"/>
    <property type="match status" value="1"/>
</dbReference>
<dbReference type="Pfam" id="PF02880">
    <property type="entry name" value="PGM_PMM_III"/>
    <property type="match status" value="1"/>
</dbReference>
<dbReference type="Pfam" id="PF00408">
    <property type="entry name" value="PGM_PMM_IV"/>
    <property type="match status" value="1"/>
</dbReference>
<dbReference type="PRINTS" id="PR00509">
    <property type="entry name" value="PGMPMM"/>
</dbReference>
<dbReference type="SUPFAM" id="SSF55957">
    <property type="entry name" value="Phosphoglucomutase, C-terminal domain"/>
    <property type="match status" value="1"/>
</dbReference>
<dbReference type="SUPFAM" id="SSF53738">
    <property type="entry name" value="Phosphoglucomutase, first 3 domains"/>
    <property type="match status" value="3"/>
</dbReference>
<dbReference type="PROSITE" id="PS00710">
    <property type="entry name" value="PGM_PMM"/>
    <property type="match status" value="1"/>
</dbReference>
<accession>P9WN40</accession>
<accession>L0TCJ2</accession>
<accession>O06258</accession>
<accession>Q7D5J3</accession>
<name>GLMM_MYCTO</name>
<keyword id="KW-0413">Isomerase</keyword>
<keyword id="KW-0460">Magnesium</keyword>
<keyword id="KW-0479">Metal-binding</keyword>
<keyword id="KW-0597">Phosphoprotein</keyword>
<keyword id="KW-1185">Reference proteome</keyword>